<name>URM1_LACBS</name>
<evidence type="ECO:0000255" key="1">
    <source>
        <dbReference type="HAMAP-Rule" id="MF_03048"/>
    </source>
</evidence>
<evidence type="ECO:0000256" key="2">
    <source>
        <dbReference type="SAM" id="MobiDB-lite"/>
    </source>
</evidence>
<organism>
    <name type="scientific">Laccaria bicolor (strain S238N-H82 / ATCC MYA-4686)</name>
    <name type="common">Bicoloured deceiver</name>
    <name type="synonym">Laccaria laccata var. bicolor</name>
    <dbReference type="NCBI Taxonomy" id="486041"/>
    <lineage>
        <taxon>Eukaryota</taxon>
        <taxon>Fungi</taxon>
        <taxon>Dikarya</taxon>
        <taxon>Basidiomycota</taxon>
        <taxon>Agaricomycotina</taxon>
        <taxon>Agaricomycetes</taxon>
        <taxon>Agaricomycetidae</taxon>
        <taxon>Agaricales</taxon>
        <taxon>Agaricineae</taxon>
        <taxon>Hydnangiaceae</taxon>
        <taxon>Laccaria</taxon>
    </lineage>
</organism>
<accession>B0D4J6</accession>
<protein>
    <recommendedName>
        <fullName evidence="1">Ubiquitin-related modifier 1</fullName>
    </recommendedName>
</protein>
<sequence>MSTDSNTMFLKIEFGGGLELLFSNQRSHRITIPSTVPADNNTSVTTKDAASPATRPADVTYLLHHLRDHLLKEREELFMENGTVRPGILVLINDTDWELEGEGEYLLKDGDEIVLISTLHGG</sequence>
<comment type="function">
    <text evidence="1">Acts as a sulfur carrier required for 2-thiolation of mcm(5)S(2)U at tRNA wobble positions of cytosolic tRNA(Lys), tRNA(Glu) and tRNA(Gln). Serves as sulfur donor in tRNA 2-thiolation reaction by being thiocarboxylated (-COSH) at its C-terminus by the MOCS3 homolog UBA4. The sulfur is then transferred to tRNA to form 2-thiolation of mcm(5)S(2)U. Prior mcm(5) tRNA modification by the elongator complex is required for 2-thiolation. Also acts as a ubiquitin-like protein (UBL) that is covalently conjugated via an isopeptide bond to lysine residues of target proteins such as AHP1. The thiocarboxylated form serves as substrate for conjugation and oxidative stress specifically induces the formation of UBL-protein conjugates.</text>
</comment>
<comment type="pathway">
    <text evidence="1">tRNA modification; 5-methoxycarbonylmethyl-2-thiouridine-tRNA biosynthesis.</text>
</comment>
<comment type="subcellular location">
    <subcellularLocation>
        <location evidence="1">Cytoplasm</location>
    </subcellularLocation>
</comment>
<comment type="PTM">
    <text evidence="1">C-terminal thiocarboxylation occurs in 2 steps, it is first acyl-adenylated (-COAMP) via the hesA/moeB/thiF part of UBA4, then thiocarboxylated (-COSH) via the rhodanese domain of UBA4.</text>
</comment>
<comment type="similarity">
    <text evidence="1">Belongs to the URM1 family.</text>
</comment>
<proteinExistence type="inferred from homology"/>
<gene>
    <name evidence="1" type="primary">URM1</name>
    <name type="ORF">LACBIDRAFT_184088</name>
</gene>
<reference key="1">
    <citation type="journal article" date="2008" name="Nature">
        <title>The genome of Laccaria bicolor provides insights into mycorrhizal symbiosis.</title>
        <authorList>
            <person name="Martin F."/>
            <person name="Aerts A."/>
            <person name="Ahren D."/>
            <person name="Brun A."/>
            <person name="Danchin E.G.J."/>
            <person name="Duchaussoy F."/>
            <person name="Gibon J."/>
            <person name="Kohler A."/>
            <person name="Lindquist E."/>
            <person name="Pereda V."/>
            <person name="Salamov A."/>
            <person name="Shapiro H.J."/>
            <person name="Wuyts J."/>
            <person name="Blaudez D."/>
            <person name="Buee M."/>
            <person name="Brokstein P."/>
            <person name="Canbaeck B."/>
            <person name="Cohen D."/>
            <person name="Courty P.E."/>
            <person name="Coutinho P.M."/>
            <person name="Delaruelle C."/>
            <person name="Detter J.C."/>
            <person name="Deveau A."/>
            <person name="DiFazio S."/>
            <person name="Duplessis S."/>
            <person name="Fraissinet-Tachet L."/>
            <person name="Lucic E."/>
            <person name="Frey-Klett P."/>
            <person name="Fourrey C."/>
            <person name="Feussner I."/>
            <person name="Gay G."/>
            <person name="Grimwood J."/>
            <person name="Hoegger P.J."/>
            <person name="Jain P."/>
            <person name="Kilaru S."/>
            <person name="Labbe J."/>
            <person name="Lin Y.C."/>
            <person name="Legue V."/>
            <person name="Le Tacon F."/>
            <person name="Marmeisse R."/>
            <person name="Melayah D."/>
            <person name="Montanini B."/>
            <person name="Muratet M."/>
            <person name="Nehls U."/>
            <person name="Niculita-Hirzel H."/>
            <person name="Oudot-Le Secq M.P."/>
            <person name="Peter M."/>
            <person name="Quesneville H."/>
            <person name="Rajashekar B."/>
            <person name="Reich M."/>
            <person name="Rouhier N."/>
            <person name="Schmutz J."/>
            <person name="Yin T."/>
            <person name="Chalot M."/>
            <person name="Henrissat B."/>
            <person name="Kuees U."/>
            <person name="Lucas S."/>
            <person name="Van de Peer Y."/>
            <person name="Podila G.K."/>
            <person name="Polle A."/>
            <person name="Pukkila P.J."/>
            <person name="Richardson P.M."/>
            <person name="Rouze P."/>
            <person name="Sanders I.R."/>
            <person name="Stajich J.E."/>
            <person name="Tunlid A."/>
            <person name="Tuskan G."/>
            <person name="Grigoriev I.V."/>
        </authorList>
    </citation>
    <scope>NUCLEOTIDE SEQUENCE [LARGE SCALE GENOMIC DNA]</scope>
    <source>
        <strain>S238N-H82 / ATCC MYA-4686</strain>
    </source>
</reference>
<dbReference type="EMBL" id="DS547097">
    <property type="protein sequence ID" value="EDR10353.1"/>
    <property type="molecule type" value="Genomic_DNA"/>
</dbReference>
<dbReference type="RefSeq" id="XP_001878803.1">
    <property type="nucleotide sequence ID" value="XM_001878768.1"/>
</dbReference>
<dbReference type="SMR" id="B0D4J6"/>
<dbReference type="FunCoup" id="B0D4J6">
    <property type="interactions" value="346"/>
</dbReference>
<dbReference type="STRING" id="486041.B0D4J6"/>
<dbReference type="GeneID" id="6074643"/>
<dbReference type="KEGG" id="lbc:LACBIDRAFT_184088"/>
<dbReference type="HOGENOM" id="CLU_148208_0_0_1"/>
<dbReference type="InParanoid" id="B0D4J6"/>
<dbReference type="OrthoDB" id="10248987at2759"/>
<dbReference type="UniPathway" id="UPA00988"/>
<dbReference type="Proteomes" id="UP000001194">
    <property type="component" value="Unassembled WGS sequence"/>
</dbReference>
<dbReference type="GO" id="GO:0005829">
    <property type="term" value="C:cytosol"/>
    <property type="evidence" value="ECO:0007669"/>
    <property type="project" value="UniProtKB-UniRule"/>
</dbReference>
<dbReference type="GO" id="GO:0032447">
    <property type="term" value="P:protein urmylation"/>
    <property type="evidence" value="ECO:0007669"/>
    <property type="project" value="UniProtKB-UniRule"/>
</dbReference>
<dbReference type="GO" id="GO:0034227">
    <property type="term" value="P:tRNA thio-modification"/>
    <property type="evidence" value="ECO:0007669"/>
    <property type="project" value="UniProtKB-UniRule"/>
</dbReference>
<dbReference type="GO" id="GO:0002098">
    <property type="term" value="P:tRNA wobble uridine modification"/>
    <property type="evidence" value="ECO:0007669"/>
    <property type="project" value="UniProtKB-UniRule"/>
</dbReference>
<dbReference type="CDD" id="cd01764">
    <property type="entry name" value="Ubl_Urm1"/>
    <property type="match status" value="1"/>
</dbReference>
<dbReference type="Gene3D" id="3.10.20.30">
    <property type="match status" value="1"/>
</dbReference>
<dbReference type="HAMAP" id="MF_03048">
    <property type="entry name" value="Urm1"/>
    <property type="match status" value="1"/>
</dbReference>
<dbReference type="InterPro" id="IPR012675">
    <property type="entry name" value="Beta-grasp_dom_sf"/>
</dbReference>
<dbReference type="InterPro" id="IPR016155">
    <property type="entry name" value="Mopterin_synth/thiamin_S_b"/>
</dbReference>
<dbReference type="InterPro" id="IPR015221">
    <property type="entry name" value="Urm1"/>
</dbReference>
<dbReference type="PANTHER" id="PTHR14986">
    <property type="entry name" value="RURM1 PROTEIN"/>
    <property type="match status" value="1"/>
</dbReference>
<dbReference type="Pfam" id="PF09138">
    <property type="entry name" value="Urm1"/>
    <property type="match status" value="1"/>
</dbReference>
<dbReference type="PIRSF" id="PIRSF037379">
    <property type="entry name" value="Ubiquitin-related_modifier_1"/>
    <property type="match status" value="1"/>
</dbReference>
<dbReference type="SUPFAM" id="SSF54285">
    <property type="entry name" value="MoaD/ThiS"/>
    <property type="match status" value="1"/>
</dbReference>
<feature type="chain" id="PRO_0000367883" description="Ubiquitin-related modifier 1">
    <location>
        <begin position="1"/>
        <end position="122"/>
    </location>
</feature>
<feature type="region of interest" description="Disordered" evidence="2">
    <location>
        <begin position="33"/>
        <end position="52"/>
    </location>
</feature>
<feature type="compositionally biased region" description="Polar residues" evidence="2">
    <location>
        <begin position="33"/>
        <end position="48"/>
    </location>
</feature>
<feature type="modified residue" description="1-thioglycine" evidence="1">
    <location>
        <position position="122"/>
    </location>
</feature>
<feature type="cross-link" description="Glycyl lysine isopeptide (Gly-Lys) (interchain with K-? in acceptor proteins)" evidence="1">
    <location>
        <position position="122"/>
    </location>
</feature>
<keyword id="KW-0963">Cytoplasm</keyword>
<keyword id="KW-1017">Isopeptide bond</keyword>
<keyword id="KW-1185">Reference proteome</keyword>
<keyword id="KW-0819">tRNA processing</keyword>
<keyword id="KW-0833">Ubl conjugation pathway</keyword>